<sequence length="141" mass="15602">MSFSLNFTLPANTTSSPVTGGKETDCGPSLGLAAGIPSLVATALLVALLFTLIHRRRSSIEAMEESDRPCEISEIDDSPKISENPRRSPTHEKNTMGAQEAHIYVKTAAGSEEPVHDRYRPTIEMERRRGLWWLVPRLSLE</sequence>
<dbReference type="EMBL" id="CR861397">
    <property type="protein sequence ID" value="CAH93455.1"/>
    <property type="molecule type" value="mRNA"/>
</dbReference>
<dbReference type="RefSeq" id="NP_001127023.1">
    <property type="nucleotide sequence ID" value="NM_001133551.1"/>
</dbReference>
<dbReference type="FunCoup" id="Q5R461">
    <property type="interactions" value="11"/>
</dbReference>
<dbReference type="STRING" id="9601.ENSPPYP00000002923"/>
<dbReference type="GlyCosmos" id="Q5R461">
    <property type="glycosylation" value="3 sites, No reported glycans"/>
</dbReference>
<dbReference type="Ensembl" id="ENSPPYT00000036631.1">
    <property type="protein sequence ID" value="ENSPPYP00000035729.1"/>
    <property type="gene ID" value="ENSPPYG00000002519.2"/>
</dbReference>
<dbReference type="GeneID" id="100174048"/>
<dbReference type="KEGG" id="pon:100174048"/>
<dbReference type="CTD" id="93377"/>
<dbReference type="eggNOG" id="ENOG502RWAT">
    <property type="taxonomic scope" value="Eukaryota"/>
</dbReference>
<dbReference type="GeneTree" id="ENSGT00390000009395"/>
<dbReference type="InParanoid" id="Q5R461"/>
<dbReference type="OMA" id="DCGPSVG"/>
<dbReference type="OrthoDB" id="9831411at2759"/>
<dbReference type="Proteomes" id="UP000001595">
    <property type="component" value="Chromosome 10"/>
</dbReference>
<dbReference type="GO" id="GO:0044291">
    <property type="term" value="C:cell-cell contact zone"/>
    <property type="evidence" value="ECO:0007669"/>
    <property type="project" value="Ensembl"/>
</dbReference>
<dbReference type="GO" id="GO:0005794">
    <property type="term" value="C:Golgi apparatus"/>
    <property type="evidence" value="ECO:0007669"/>
    <property type="project" value="Ensembl"/>
</dbReference>
<dbReference type="GO" id="GO:0005886">
    <property type="term" value="C:plasma membrane"/>
    <property type="evidence" value="ECO:0000250"/>
    <property type="project" value="UniProtKB"/>
</dbReference>
<dbReference type="GO" id="GO:0048713">
    <property type="term" value="P:regulation of oligodendrocyte differentiation"/>
    <property type="evidence" value="ECO:0000250"/>
    <property type="project" value="UniProtKB"/>
</dbReference>
<dbReference type="InterPro" id="IPR026609">
    <property type="entry name" value="Opalin"/>
</dbReference>
<dbReference type="PANTHER" id="PTHR21102">
    <property type="entry name" value="OPALIN"/>
    <property type="match status" value="1"/>
</dbReference>
<dbReference type="PANTHER" id="PTHR21102:SF0">
    <property type="entry name" value="OPALIN"/>
    <property type="match status" value="1"/>
</dbReference>
<accession>Q5R461</accession>
<organism>
    <name type="scientific">Pongo abelii</name>
    <name type="common">Sumatran orangutan</name>
    <name type="synonym">Pongo pygmaeus abelii</name>
    <dbReference type="NCBI Taxonomy" id="9601"/>
    <lineage>
        <taxon>Eukaryota</taxon>
        <taxon>Metazoa</taxon>
        <taxon>Chordata</taxon>
        <taxon>Craniata</taxon>
        <taxon>Vertebrata</taxon>
        <taxon>Euteleostomi</taxon>
        <taxon>Mammalia</taxon>
        <taxon>Eutheria</taxon>
        <taxon>Euarchontoglires</taxon>
        <taxon>Primates</taxon>
        <taxon>Haplorrhini</taxon>
        <taxon>Catarrhini</taxon>
        <taxon>Hominidae</taxon>
        <taxon>Pongo</taxon>
    </lineage>
</organism>
<gene>
    <name type="primary">OPALIN</name>
    <name type="synonym">TMEM10</name>
</gene>
<evidence type="ECO:0000250" key="1"/>
<evidence type="ECO:0000250" key="2">
    <source>
        <dbReference type="UniProtKB" id="Q7M750"/>
    </source>
</evidence>
<evidence type="ECO:0000255" key="3"/>
<evidence type="ECO:0000256" key="4">
    <source>
        <dbReference type="SAM" id="MobiDB-lite"/>
    </source>
</evidence>
<keyword id="KW-1003">Cell membrane</keyword>
<keyword id="KW-0325">Glycoprotein</keyword>
<keyword id="KW-0472">Membrane</keyword>
<keyword id="KW-1185">Reference proteome</keyword>
<keyword id="KW-0812">Transmembrane</keyword>
<keyword id="KW-1133">Transmembrane helix</keyword>
<proteinExistence type="evidence at transcript level"/>
<name>OPALI_PONAB</name>
<protein>
    <recommendedName>
        <fullName>Opalin</fullName>
    </recommendedName>
    <alternativeName>
        <fullName>Oligodendrocytic myelin paranodal and inner loop protein</fullName>
    </alternativeName>
    <alternativeName>
        <fullName>Transmembrane protein 10</fullName>
    </alternativeName>
</protein>
<feature type="chain" id="PRO_0000072594" description="Opalin">
    <location>
        <begin position="1"/>
        <end position="141"/>
    </location>
</feature>
<feature type="topological domain" description="Extracellular" evidence="3">
    <location>
        <begin position="1"/>
        <end position="29"/>
    </location>
</feature>
<feature type="transmembrane region" description="Helical" evidence="3">
    <location>
        <begin position="30"/>
        <end position="50"/>
    </location>
</feature>
<feature type="topological domain" description="Cytoplasmic" evidence="3">
    <location>
        <begin position="51"/>
        <end position="141"/>
    </location>
</feature>
<feature type="region of interest" description="Disordered" evidence="4">
    <location>
        <begin position="61"/>
        <end position="98"/>
    </location>
</feature>
<feature type="region of interest" description="Required for plasma membrane localization" evidence="2">
    <location>
        <begin position="77"/>
        <end position="93"/>
    </location>
</feature>
<feature type="compositionally biased region" description="Basic and acidic residues" evidence="4">
    <location>
        <begin position="65"/>
        <end position="94"/>
    </location>
</feature>
<feature type="glycosylation site" description="N-linked (GlcNAc...) asparagine" evidence="3">
    <location>
        <position position="6"/>
    </location>
</feature>
<feature type="glycosylation site" description="N-linked (GlcNAc...) asparagine" evidence="3">
    <location>
        <position position="12"/>
    </location>
</feature>
<feature type="glycosylation site" description="O-linked (GalNAc...) threonine" evidence="1">
    <location>
        <position position="14"/>
    </location>
</feature>
<reference key="1">
    <citation type="submission" date="2004-11" db="EMBL/GenBank/DDBJ databases">
        <authorList>
            <consortium name="The German cDNA consortium"/>
        </authorList>
    </citation>
    <scope>NUCLEOTIDE SEQUENCE [LARGE SCALE MRNA]</scope>
    <source>
        <tissue>Brain cortex</tissue>
    </source>
</reference>
<comment type="function">
    <text evidence="2">Central nervous system-specific myelin protein that increase myelin genes expression during oligodendrocyte differentiation. Promotes oligodendrocyte terminal differentiation.</text>
</comment>
<comment type="subcellular location">
    <subcellularLocation>
        <location evidence="2">Cell membrane</location>
        <topology evidence="3">Single-pass type I membrane protein</topology>
    </subcellularLocation>
    <text evidence="2">In the CNS, enriched in the myelin paranodal and inner loop membranes, but not that of the PNS. Enriched in the leading edge of extending processes.</text>
</comment>